<feature type="signal peptide" evidence="1">
    <location>
        <begin position="1"/>
        <end position="25"/>
    </location>
</feature>
<feature type="chain" id="PRO_0000023863" description="Cytochrome c6-like">
    <location>
        <begin position="26"/>
        <end position="111"/>
    </location>
</feature>
<feature type="binding site" description="covalent" evidence="2">
    <location>
        <position position="39"/>
    </location>
    <ligand>
        <name>heme c</name>
        <dbReference type="ChEBI" id="CHEBI:61717"/>
    </ligand>
</feature>
<feature type="binding site" description="covalent" evidence="2">
    <location>
        <position position="42"/>
    </location>
    <ligand>
        <name>heme c</name>
        <dbReference type="ChEBI" id="CHEBI:61717"/>
    </ligand>
</feature>
<feature type="binding site" description="axial binding residue" evidence="2">
    <location>
        <position position="43"/>
    </location>
    <ligand>
        <name>heme c</name>
        <dbReference type="ChEBI" id="CHEBI:61717"/>
    </ligand>
    <ligandPart>
        <name>Fe</name>
        <dbReference type="ChEBI" id="CHEBI:18248"/>
    </ligandPart>
</feature>
<feature type="binding site" description="axial binding residue" evidence="2">
    <location>
        <position position="83"/>
    </location>
    <ligand>
        <name>heme c</name>
        <dbReference type="ChEBI" id="CHEBI:61717"/>
    </ligand>
    <ligandPart>
        <name>Fe</name>
        <dbReference type="ChEBI" id="CHEBI:18248"/>
    </ligandPart>
</feature>
<gene>
    <name type="ordered locus">all0161</name>
</gene>
<name>CYC6L_NOSS1</name>
<protein>
    <recommendedName>
        <fullName>Cytochrome c6-like</fullName>
    </recommendedName>
</protein>
<proteinExistence type="inferred from homology"/>
<reference key="1">
    <citation type="journal article" date="2001" name="DNA Res.">
        <title>Complete genomic sequence of the filamentous nitrogen-fixing cyanobacterium Anabaena sp. strain PCC 7120.</title>
        <authorList>
            <person name="Kaneko T."/>
            <person name="Nakamura Y."/>
            <person name="Wolk C.P."/>
            <person name="Kuritz T."/>
            <person name="Sasamoto S."/>
            <person name="Watanabe A."/>
            <person name="Iriguchi M."/>
            <person name="Ishikawa A."/>
            <person name="Kawashima K."/>
            <person name="Kimura T."/>
            <person name="Kishida Y."/>
            <person name="Kohara M."/>
            <person name="Matsumoto M."/>
            <person name="Matsuno A."/>
            <person name="Muraki A."/>
            <person name="Nakazaki N."/>
            <person name="Shimpo S."/>
            <person name="Sugimoto M."/>
            <person name="Takazawa M."/>
            <person name="Yamada M."/>
            <person name="Yasuda M."/>
            <person name="Tabata S."/>
        </authorList>
    </citation>
    <scope>NUCLEOTIDE SEQUENCE [LARGE SCALE GENOMIC DNA]</scope>
    <source>
        <strain>PCC 7120 / SAG 25.82 / UTEX 2576</strain>
    </source>
</reference>
<sequence>MQKFLKLVLVTFLFLISTLTPPANAENTINGEQIFSVHCAGCHINGSNIIRRGKNLQKKTLKKYGMDSLEAIEAIVTNGKNNMSAYKDRLSEQEIQDVAAYVLEQAEKGWR</sequence>
<accession>Q8Z0D7</accession>
<dbReference type="EMBL" id="BA000019">
    <property type="protein sequence ID" value="BAB77685.1"/>
    <property type="molecule type" value="Genomic_DNA"/>
</dbReference>
<dbReference type="PIR" id="AI1826">
    <property type="entry name" value="AI1826"/>
</dbReference>
<dbReference type="SMR" id="Q8Z0D7"/>
<dbReference type="STRING" id="103690.gene:10492166"/>
<dbReference type="KEGG" id="ana:all0161"/>
<dbReference type="eggNOG" id="COG2010">
    <property type="taxonomic scope" value="Bacteria"/>
</dbReference>
<dbReference type="OrthoDB" id="5570429at2"/>
<dbReference type="Proteomes" id="UP000002483">
    <property type="component" value="Chromosome"/>
</dbReference>
<dbReference type="GO" id="GO:0031979">
    <property type="term" value="C:plasma membrane-derived thylakoid lumen"/>
    <property type="evidence" value="ECO:0007669"/>
    <property type="project" value="UniProtKB-SubCell"/>
</dbReference>
<dbReference type="GO" id="GO:0009055">
    <property type="term" value="F:electron transfer activity"/>
    <property type="evidence" value="ECO:0007669"/>
    <property type="project" value="InterPro"/>
</dbReference>
<dbReference type="GO" id="GO:0020037">
    <property type="term" value="F:heme binding"/>
    <property type="evidence" value="ECO:0007669"/>
    <property type="project" value="InterPro"/>
</dbReference>
<dbReference type="GO" id="GO:0005506">
    <property type="term" value="F:iron ion binding"/>
    <property type="evidence" value="ECO:0007669"/>
    <property type="project" value="InterPro"/>
</dbReference>
<dbReference type="Gene3D" id="1.10.760.10">
    <property type="entry name" value="Cytochrome c-like domain"/>
    <property type="match status" value="1"/>
</dbReference>
<dbReference type="InterPro" id="IPR009056">
    <property type="entry name" value="Cyt_c-like_dom"/>
</dbReference>
<dbReference type="InterPro" id="IPR036909">
    <property type="entry name" value="Cyt_c-like_dom_sf"/>
</dbReference>
<dbReference type="InterPro" id="IPR023655">
    <property type="entry name" value="Cyt_C6"/>
</dbReference>
<dbReference type="InterPro" id="IPR008168">
    <property type="entry name" value="Cyt_C_IC"/>
</dbReference>
<dbReference type="NCBIfam" id="NF045930">
    <property type="entry name" value="Cytc6PetJCyano"/>
    <property type="match status" value="1"/>
</dbReference>
<dbReference type="PANTHER" id="PTHR34688">
    <property type="entry name" value="CYTOCHROME C6, CHLOROPLASTIC"/>
    <property type="match status" value="1"/>
</dbReference>
<dbReference type="PANTHER" id="PTHR34688:SF2">
    <property type="entry name" value="CYTOCHROME C6, CHLOROPLASTIC"/>
    <property type="match status" value="1"/>
</dbReference>
<dbReference type="Pfam" id="PF13442">
    <property type="entry name" value="Cytochrome_CBB3"/>
    <property type="match status" value="1"/>
</dbReference>
<dbReference type="PRINTS" id="PR00605">
    <property type="entry name" value="CYTCHROMECIC"/>
</dbReference>
<dbReference type="SUPFAM" id="SSF46626">
    <property type="entry name" value="Cytochrome c"/>
    <property type="match status" value="1"/>
</dbReference>
<dbReference type="PROSITE" id="PS51007">
    <property type="entry name" value="CYTC"/>
    <property type="match status" value="1"/>
</dbReference>
<comment type="subcellular location">
    <subcellularLocation>
        <location evidence="3">Cellular thylakoid lumen</location>
    </subcellularLocation>
</comment>
<comment type="PTM">
    <text evidence="1">Binds 1 heme c group covalently per subunit.</text>
</comment>
<comment type="similarity">
    <text evidence="3">Belongs to the cytochrome c family. PetJ subfamily.</text>
</comment>
<organism>
    <name type="scientific">Nostoc sp. (strain PCC 7120 / SAG 25.82 / UTEX 2576)</name>
    <dbReference type="NCBI Taxonomy" id="103690"/>
    <lineage>
        <taxon>Bacteria</taxon>
        <taxon>Bacillati</taxon>
        <taxon>Cyanobacteriota</taxon>
        <taxon>Cyanophyceae</taxon>
        <taxon>Nostocales</taxon>
        <taxon>Nostocaceae</taxon>
        <taxon>Nostoc</taxon>
    </lineage>
</organism>
<keyword id="KW-0249">Electron transport</keyword>
<keyword id="KW-0349">Heme</keyword>
<keyword id="KW-0408">Iron</keyword>
<keyword id="KW-0479">Metal-binding</keyword>
<keyword id="KW-1185">Reference proteome</keyword>
<keyword id="KW-0732">Signal</keyword>
<keyword id="KW-0793">Thylakoid</keyword>
<keyword id="KW-0813">Transport</keyword>
<evidence type="ECO:0000250" key="1"/>
<evidence type="ECO:0000255" key="2">
    <source>
        <dbReference type="PROSITE-ProRule" id="PRU00433"/>
    </source>
</evidence>
<evidence type="ECO:0000305" key="3"/>